<keyword id="KW-0217">Developmental protein</keyword>
<keyword id="KW-0221">Differentiation</keyword>
<keyword id="KW-1015">Disulfide bond</keyword>
<keyword id="KW-0245">EGF-like domain</keyword>
<keyword id="KW-0325">Glycoprotein</keyword>
<keyword id="KW-0472">Membrane</keyword>
<keyword id="KW-1185">Reference proteome</keyword>
<keyword id="KW-0732">Signal</keyword>
<keyword id="KW-0744">Spermatogenesis</keyword>
<keyword id="KW-0812">Transmembrane</keyword>
<keyword id="KW-1133">Transmembrane helix</keyword>
<organism>
    <name type="scientific">Mus musculus</name>
    <name type="common">Mouse</name>
    <dbReference type="NCBI Taxonomy" id="10090"/>
    <lineage>
        <taxon>Eukaryota</taxon>
        <taxon>Metazoa</taxon>
        <taxon>Chordata</taxon>
        <taxon>Craniata</taxon>
        <taxon>Vertebrata</taxon>
        <taxon>Euteleostomi</taxon>
        <taxon>Mammalia</taxon>
        <taxon>Eutheria</taxon>
        <taxon>Euarchontoglires</taxon>
        <taxon>Glires</taxon>
        <taxon>Rodentia</taxon>
        <taxon>Myomorpha</taxon>
        <taxon>Muroidea</taxon>
        <taxon>Muridae</taxon>
        <taxon>Murinae</taxon>
        <taxon>Mus</taxon>
        <taxon>Mus</taxon>
    </lineage>
</organism>
<sequence>MPLLFILAELAMLFARLDSEGICLHITVPQKIEPRKGGDAEGKVTYVITIDGKPYSLHLRNHSFLSQNFLVYTYNETGSLYSDSSHFLAHCHYRGYVDEVPNSIVTLSICSGLRGFLQLENVSYGIEPLESSARFEHIVYQVKSDSSMLAGNDSHVWQIDQLDKGHFNEQDKNHSQLLPQSLKLHIIVGKFLFDYMGSDIMAITQKIFQIIGLVNAMLTQLKLSVVLASLELWSDKNHISTDGNATDILQRLLDWKRDYLTLQSNEITHLLIYRRRPKYIGAASPGEICSKSYVAGVGMYPEDIGLEGFSVVITQLIGLHIGLTYDDNIRNCSCPSAPCIMQQGALSSSGKKTFSNCSLHDYMHYVSNFDTQCLGDLSNVHVLQPNQAVCGNGIMEAGEECDCGNETECQFKECCDHETCRLKGSAQCGSGACCMPTCELSASGTPCRKAVDPECDFTEYCDGSSSHCVPDTFALNGHLCRLGSAYCYNGRCQALNDQCVSLFGKGSQGASYACFEKVNSPRENLANCDSKDSYSVPCGQQDVLCGKLACFRPPKNYKSPSQSVVYSYVHDSVCLSILPGLSMRSDGRDSAYVADGTVCGPQMYCINGTCKEVNFTGNDCNATKKCKGNGICNNFGNCQCFPDYRPPDCNLQIGSPGGSIDDGNTLRTESAFATKRLSKNEDSWVILGFFIFLPFIVTFLVGIMKRNERKIVPQGEHKI</sequence>
<accession>Q9R157</accession>
<accession>Q60621</accession>
<accession>Q80Y08</accession>
<gene>
    <name type="primary">Adam18</name>
    <name type="synonym">Adam27</name>
    <name type="synonym">Dtgn3</name>
    <name type="synonym">Tmdc3</name>
</gene>
<feature type="signal peptide" evidence="2">
    <location>
        <begin position="1"/>
        <end position="19"/>
    </location>
</feature>
<feature type="propeptide" id="PRO_0000029100" evidence="2">
    <location>
        <begin position="20"/>
        <end position="179"/>
    </location>
</feature>
<feature type="chain" id="PRO_0000029101" description="Disintegrin and metalloproteinase domain-containing protein 18">
    <location>
        <begin position="180"/>
        <end position="719"/>
    </location>
</feature>
<feature type="topological domain" description="Extracellular" evidence="2">
    <location>
        <begin position="173"/>
        <end position="683"/>
    </location>
</feature>
<feature type="transmembrane region" description="Helical" evidence="2">
    <location>
        <begin position="684"/>
        <end position="704"/>
    </location>
</feature>
<feature type="topological domain" description="Cytoplasmic" evidence="2">
    <location>
        <begin position="705"/>
        <end position="719"/>
    </location>
</feature>
<feature type="domain" description="Peptidase M12B" evidence="5">
    <location>
        <begin position="180"/>
        <end position="378"/>
    </location>
</feature>
<feature type="domain" description="Disintegrin" evidence="3">
    <location>
        <begin position="387"/>
        <end position="476"/>
    </location>
</feature>
<feature type="domain" description="EGF-like" evidence="4">
    <location>
        <begin position="616"/>
        <end position="650"/>
    </location>
</feature>
<feature type="glycosylation site" description="N-linked (GlcNAc...) asparagine" evidence="2">
    <location>
        <position position="61"/>
    </location>
</feature>
<feature type="glycosylation site" description="N-linked (GlcNAc...) asparagine" evidence="2">
    <location>
        <position position="75"/>
    </location>
</feature>
<feature type="glycosylation site" description="N-linked (GlcNAc...) asparagine" evidence="2">
    <location>
        <position position="121"/>
    </location>
</feature>
<feature type="glycosylation site" description="N-linked (GlcNAc...) asparagine" evidence="2">
    <location>
        <position position="152"/>
    </location>
</feature>
<feature type="glycosylation site" description="N-linked (GlcNAc...) asparagine" evidence="2">
    <location>
        <position position="173"/>
    </location>
</feature>
<feature type="glycosylation site" description="N-linked (GlcNAc...) asparagine" evidence="2">
    <location>
        <position position="244"/>
    </location>
</feature>
<feature type="glycosylation site" description="N-linked (GlcNAc...) asparagine" evidence="2">
    <location>
        <position position="331"/>
    </location>
</feature>
<feature type="glycosylation site" description="N-linked (GlcNAc...) asparagine" evidence="2">
    <location>
        <position position="356"/>
    </location>
</feature>
<feature type="glycosylation site" description="N-linked (GlcNAc...) asparagine" evidence="2">
    <location>
        <position position="405"/>
    </location>
</feature>
<feature type="glycosylation site" description="N-linked (GlcNAc...) asparagine" evidence="2">
    <location>
        <position position="607"/>
    </location>
</feature>
<feature type="glycosylation site" description="N-linked (GlcNAc...) asparagine" evidence="2">
    <location>
        <position position="614"/>
    </location>
</feature>
<feature type="glycosylation site" description="N-linked (GlcNAc...) asparagine" evidence="2">
    <location>
        <position position="621"/>
    </location>
</feature>
<feature type="disulfide bond" evidence="1">
    <location>
        <begin position="289"/>
        <end position="373"/>
    </location>
</feature>
<feature type="disulfide bond" evidence="1">
    <location>
        <begin position="332"/>
        <end position="357"/>
    </location>
</feature>
<feature type="disulfide bond" evidence="1">
    <location>
        <begin position="334"/>
        <end position="339"/>
    </location>
</feature>
<feature type="disulfide bond" evidence="1">
    <location>
        <begin position="447"/>
        <end position="468"/>
    </location>
</feature>
<feature type="disulfide bond" evidence="1">
    <location>
        <begin position="620"/>
        <end position="632"/>
    </location>
</feature>
<feature type="disulfide bond" evidence="1">
    <location>
        <begin position="626"/>
        <end position="638"/>
    </location>
</feature>
<feature type="disulfide bond" evidence="1">
    <location>
        <begin position="640"/>
        <end position="649"/>
    </location>
</feature>
<feature type="sequence conflict" description="In Ref. 1; AAD48844." evidence="6" ref="1">
    <original>D</original>
    <variation>N</variation>
    <location>
        <position position="145"/>
    </location>
</feature>
<feature type="sequence conflict" description="In Ref. 1; AAD48844." evidence="6" ref="1">
    <original>I</original>
    <variation>T</variation>
    <location>
        <position position="159"/>
    </location>
</feature>
<feature type="sequence conflict" description="In Ref. 1; AAD48844." evidence="6" ref="1">
    <original>E</original>
    <variation>D</variation>
    <location>
        <position position="169"/>
    </location>
</feature>
<feature type="sequence conflict" description="In Ref. 1; AAD48844." evidence="6" ref="1">
    <original>R</original>
    <variation>H</variation>
    <location>
        <position position="276"/>
    </location>
</feature>
<feature type="sequence conflict" description="In Ref. 1; AAD48844." evidence="6" ref="1">
    <original>N</original>
    <variation>K</variation>
    <location>
        <position position="386"/>
    </location>
</feature>
<feature type="sequence conflict" description="In Ref. 1; AAD48844." evidence="6" ref="1">
    <original>I</original>
    <variation>V</variation>
    <location>
        <position position="577"/>
    </location>
</feature>
<evidence type="ECO:0000250" key="1"/>
<evidence type="ECO:0000255" key="2"/>
<evidence type="ECO:0000255" key="3">
    <source>
        <dbReference type="PROSITE-ProRule" id="PRU00068"/>
    </source>
</evidence>
<evidence type="ECO:0000255" key="4">
    <source>
        <dbReference type="PROSITE-ProRule" id="PRU00076"/>
    </source>
</evidence>
<evidence type="ECO:0000255" key="5">
    <source>
        <dbReference type="PROSITE-ProRule" id="PRU00276"/>
    </source>
</evidence>
<evidence type="ECO:0000305" key="6"/>
<name>ADA18_MOUSE</name>
<dbReference type="EMBL" id="AF167405">
    <property type="protein sequence ID" value="AAD48844.1"/>
    <property type="molecule type" value="mRNA"/>
</dbReference>
<dbReference type="EMBL" id="BC051136">
    <property type="protein sequence ID" value="AAH51136.2"/>
    <property type="molecule type" value="mRNA"/>
</dbReference>
<dbReference type="EMBL" id="U06148">
    <property type="protein sequence ID" value="AAA18427.1"/>
    <property type="molecule type" value="mRNA"/>
</dbReference>
<dbReference type="CCDS" id="CCDS22195.1"/>
<dbReference type="PIR" id="I48946">
    <property type="entry name" value="I48946"/>
</dbReference>
<dbReference type="RefSeq" id="NP_034214.2">
    <property type="nucleotide sequence ID" value="NM_010084.2"/>
</dbReference>
<dbReference type="SMR" id="Q9R157"/>
<dbReference type="FunCoup" id="Q9R157">
    <property type="interactions" value="2"/>
</dbReference>
<dbReference type="STRING" id="10090.ENSMUSP00000033957"/>
<dbReference type="MEROPS" id="M12.958"/>
<dbReference type="GlyCosmos" id="Q9R157">
    <property type="glycosylation" value="12 sites, No reported glycans"/>
</dbReference>
<dbReference type="GlyGen" id="Q9R157">
    <property type="glycosylation" value="12 sites, 2 N-linked glycans (2 sites)"/>
</dbReference>
<dbReference type="iPTMnet" id="Q9R157"/>
<dbReference type="PhosphoSitePlus" id="Q9R157"/>
<dbReference type="PaxDb" id="10090-ENSMUSP00000033957"/>
<dbReference type="ProteomicsDB" id="281936"/>
<dbReference type="Antibodypedia" id="23870">
    <property type="antibodies" value="38 antibodies from 7 providers"/>
</dbReference>
<dbReference type="DNASU" id="13524"/>
<dbReference type="Ensembl" id="ENSMUST00000033957.12">
    <property type="protein sequence ID" value="ENSMUSP00000033957.6"/>
    <property type="gene ID" value="ENSMUSG00000031552.14"/>
</dbReference>
<dbReference type="GeneID" id="13524"/>
<dbReference type="KEGG" id="mmu:13524"/>
<dbReference type="UCSC" id="uc009lfb.2">
    <property type="organism name" value="mouse"/>
</dbReference>
<dbReference type="AGR" id="MGI:105986"/>
<dbReference type="CTD" id="8749"/>
<dbReference type="MGI" id="MGI:105986">
    <property type="gene designation" value="Adam18"/>
</dbReference>
<dbReference type="VEuPathDB" id="HostDB:ENSMUSG00000031552"/>
<dbReference type="eggNOG" id="KOG3607">
    <property type="taxonomic scope" value="Eukaryota"/>
</dbReference>
<dbReference type="GeneTree" id="ENSGT00940000162281"/>
<dbReference type="InParanoid" id="Q9R157"/>
<dbReference type="OMA" id="GPQMYCV"/>
<dbReference type="OrthoDB" id="5951731at2759"/>
<dbReference type="PhylomeDB" id="Q9R157"/>
<dbReference type="TreeFam" id="TF314733"/>
<dbReference type="BioGRID-ORCS" id="13524">
    <property type="hits" value="1 hit in 78 CRISPR screens"/>
</dbReference>
<dbReference type="PRO" id="PR:Q9R157"/>
<dbReference type="Proteomes" id="UP000000589">
    <property type="component" value="Chromosome 8"/>
</dbReference>
<dbReference type="RNAct" id="Q9R157">
    <property type="molecule type" value="protein"/>
</dbReference>
<dbReference type="Bgee" id="ENSMUSG00000031552">
    <property type="expression patterns" value="Expressed in spermatocyte and 9 other cell types or tissues"/>
</dbReference>
<dbReference type="ExpressionAtlas" id="Q9R157">
    <property type="expression patterns" value="baseline and differential"/>
</dbReference>
<dbReference type="GO" id="GO:0016020">
    <property type="term" value="C:membrane"/>
    <property type="evidence" value="ECO:0007669"/>
    <property type="project" value="UniProtKB-SubCell"/>
</dbReference>
<dbReference type="GO" id="GO:0005178">
    <property type="term" value="F:integrin binding"/>
    <property type="evidence" value="ECO:0000250"/>
    <property type="project" value="MGI"/>
</dbReference>
<dbReference type="GO" id="GO:0004222">
    <property type="term" value="F:metalloendopeptidase activity"/>
    <property type="evidence" value="ECO:0007669"/>
    <property type="project" value="InterPro"/>
</dbReference>
<dbReference type="GO" id="GO:0030154">
    <property type="term" value="P:cell differentiation"/>
    <property type="evidence" value="ECO:0007669"/>
    <property type="project" value="UniProtKB-KW"/>
</dbReference>
<dbReference type="GO" id="GO:0006508">
    <property type="term" value="P:proteolysis"/>
    <property type="evidence" value="ECO:0007669"/>
    <property type="project" value="InterPro"/>
</dbReference>
<dbReference type="GO" id="GO:0007283">
    <property type="term" value="P:spermatogenesis"/>
    <property type="evidence" value="ECO:0007669"/>
    <property type="project" value="UniProtKB-KW"/>
</dbReference>
<dbReference type="CDD" id="cd04269">
    <property type="entry name" value="ZnMc_adamalysin_II_like"/>
    <property type="match status" value="1"/>
</dbReference>
<dbReference type="FunFam" id="4.10.70.10:FF:000001">
    <property type="entry name" value="Disintegrin and metalloproteinase domain-containing protein 22"/>
    <property type="match status" value="1"/>
</dbReference>
<dbReference type="Gene3D" id="3.40.390.10">
    <property type="entry name" value="Collagenase (Catalytic Domain)"/>
    <property type="match status" value="1"/>
</dbReference>
<dbReference type="Gene3D" id="4.10.70.10">
    <property type="entry name" value="Disintegrin domain"/>
    <property type="match status" value="1"/>
</dbReference>
<dbReference type="InterPro" id="IPR006586">
    <property type="entry name" value="ADAM_Cys-rich"/>
</dbReference>
<dbReference type="InterPro" id="IPR001762">
    <property type="entry name" value="Disintegrin_dom"/>
</dbReference>
<dbReference type="InterPro" id="IPR036436">
    <property type="entry name" value="Disintegrin_dom_sf"/>
</dbReference>
<dbReference type="InterPro" id="IPR000742">
    <property type="entry name" value="EGF-like_dom"/>
</dbReference>
<dbReference type="InterPro" id="IPR024079">
    <property type="entry name" value="MetalloPept_cat_dom_sf"/>
</dbReference>
<dbReference type="InterPro" id="IPR001590">
    <property type="entry name" value="Peptidase_M12B"/>
</dbReference>
<dbReference type="InterPro" id="IPR002870">
    <property type="entry name" value="Peptidase_M12B_N"/>
</dbReference>
<dbReference type="InterPro" id="IPR034027">
    <property type="entry name" value="Reprolysin_adamalysin"/>
</dbReference>
<dbReference type="PANTHER" id="PTHR11905">
    <property type="entry name" value="ADAM A DISINTEGRIN AND METALLOPROTEASE DOMAIN"/>
    <property type="match status" value="1"/>
</dbReference>
<dbReference type="PANTHER" id="PTHR11905:SF158">
    <property type="entry name" value="DISINTEGRIN AND METALLOPROTEINASE DOMAIN-CONTAINING PROTEIN 18"/>
    <property type="match status" value="1"/>
</dbReference>
<dbReference type="Pfam" id="PF08516">
    <property type="entry name" value="ADAM_CR"/>
    <property type="match status" value="1"/>
</dbReference>
<dbReference type="Pfam" id="PF00200">
    <property type="entry name" value="Disintegrin"/>
    <property type="match status" value="1"/>
</dbReference>
<dbReference type="Pfam" id="PF01562">
    <property type="entry name" value="Pep_M12B_propep"/>
    <property type="match status" value="1"/>
</dbReference>
<dbReference type="Pfam" id="PF01421">
    <property type="entry name" value="Reprolysin"/>
    <property type="match status" value="1"/>
</dbReference>
<dbReference type="SMART" id="SM00608">
    <property type="entry name" value="ACR"/>
    <property type="match status" value="1"/>
</dbReference>
<dbReference type="SMART" id="SM00050">
    <property type="entry name" value="DISIN"/>
    <property type="match status" value="1"/>
</dbReference>
<dbReference type="SUPFAM" id="SSF57552">
    <property type="entry name" value="Blood coagulation inhibitor (disintegrin)"/>
    <property type="match status" value="1"/>
</dbReference>
<dbReference type="SUPFAM" id="SSF55486">
    <property type="entry name" value="Metalloproteases ('zincins'), catalytic domain"/>
    <property type="match status" value="1"/>
</dbReference>
<dbReference type="PROSITE" id="PS50215">
    <property type="entry name" value="ADAM_MEPRO"/>
    <property type="match status" value="1"/>
</dbReference>
<dbReference type="PROSITE" id="PS50214">
    <property type="entry name" value="DISINTEGRIN_2"/>
    <property type="match status" value="1"/>
</dbReference>
<dbReference type="PROSITE" id="PS50026">
    <property type="entry name" value="EGF_3"/>
    <property type="match status" value="1"/>
</dbReference>
<protein>
    <recommendedName>
        <fullName>Disintegrin and metalloproteinase domain-containing protein 18</fullName>
        <shortName>ADAM 18</shortName>
    </recommendedName>
    <alternativeName>
        <fullName>Disintegrin and metalloproteinase domain-containing protein 27</fullName>
        <shortName>ADAM 27</shortName>
    </alternativeName>
    <alternativeName>
        <fullName>Transmembrane metalloproteinase-like, disintegrin-like, and cysteine-rich protein III</fullName>
        <shortName>tMDC III</shortName>
    </alternativeName>
</protein>
<proteinExistence type="evidence at protein level"/>
<comment type="function">
    <text>Sperm surface membrane protein that may be involved in spermatogenesis and fertilization. This is a non catalytic metalloprotease-like protein.</text>
</comment>
<comment type="subcellular location">
    <subcellularLocation>
        <location>Membrane</location>
        <topology>Single-pass type I membrane protein</topology>
    </subcellularLocation>
</comment>
<comment type="tissue specificity">
    <text>Expressed specifically in testis.</text>
</comment>
<comment type="developmental stage">
    <text>Adult levels are reached by day 16 after birth.</text>
</comment>
<comment type="domain">
    <text>A tripeptide motif (ECD) within disintegrin-like domain could be involved in the binding to egg integrin receptor and thus could mediate sperm/egg binding.</text>
</comment>
<comment type="PTM">
    <text evidence="1">The prodomain and the metalloprotease-like domain are cleaved during the epididymal maturation of the spermatozoa.</text>
</comment>
<reference key="1">
    <citation type="journal article" date="1999" name="Gene">
        <title>Identification of four novel ADAMs with potential roles in spermatogenesis and fertilization.</title>
        <authorList>
            <person name="Zhu G.-Z."/>
            <person name="Lin Y."/>
            <person name="Myles D.G."/>
            <person name="Primakoff P."/>
        </authorList>
    </citation>
    <scope>NUCLEOTIDE SEQUENCE [MRNA]</scope>
</reference>
<reference key="2">
    <citation type="journal article" date="2004" name="Genome Res.">
        <title>The status, quality, and expansion of the NIH full-length cDNA project: the Mammalian Gene Collection (MGC).</title>
        <authorList>
            <consortium name="The MGC Project Team"/>
        </authorList>
    </citation>
    <scope>NUCLEOTIDE SEQUENCE [LARGE SCALE MRNA]</scope>
    <source>
        <tissue>Testis</tissue>
    </source>
</reference>
<reference key="3">
    <citation type="journal article" date="1994" name="Proc. Natl. Acad. Sci. U.S.A.">
        <title>A family of cellular proteins related to snake venom disintegrins.</title>
        <authorList>
            <person name="Weskamp G."/>
            <person name="Blobel C.P."/>
        </authorList>
    </citation>
    <scope>NUCLEOTIDE SEQUENCE [MRNA] OF 405-453</scope>
    <source>
        <strain>BALB/cJ</strain>
    </source>
</reference>
<reference key="4">
    <citation type="journal article" date="2010" name="Cell">
        <title>A tissue-specific atlas of mouse protein phosphorylation and expression.</title>
        <authorList>
            <person name="Huttlin E.L."/>
            <person name="Jedrychowski M.P."/>
            <person name="Elias J.E."/>
            <person name="Goswami T."/>
            <person name="Rad R."/>
            <person name="Beausoleil S.A."/>
            <person name="Villen J."/>
            <person name="Haas W."/>
            <person name="Sowa M.E."/>
            <person name="Gygi S.P."/>
        </authorList>
    </citation>
    <scope>IDENTIFICATION BY MASS SPECTROMETRY [LARGE SCALE ANALYSIS]</scope>
    <source>
        <tissue>Testis</tissue>
    </source>
</reference>